<keyword id="KW-0961">Cell wall biogenesis/degradation</keyword>
<keyword id="KW-0309">Germination</keyword>
<keyword id="KW-0378">Hydrolase</keyword>
<keyword id="KW-1185">Reference proteome</keyword>
<keyword id="KW-0732">Signal</keyword>
<keyword id="KW-0749">Sporulation</keyword>
<comment type="function">
    <text evidence="1">Required for spore cortex hydrolysis during germination.</text>
</comment>
<comment type="similarity">
    <text evidence="4">Belongs to the SleB family.</text>
</comment>
<protein>
    <recommendedName>
        <fullName>Spore cortex-lytic enzyme</fullName>
        <shortName>SCLE</shortName>
    </recommendedName>
</protein>
<sequence>MHQSYKAFMIILVVCSSLTMYFTQTDNTKTYAFSDQVIQQGAVGEDVIELQARLQYLGFYNGKIDGVFGWGTYWALRNFQYEFGMEIDGLAGQTTKDKLVQASNYDKEYVTEQINKGNQFTHYGGGDRNTDGQSNSGGGSGNSGEDTGGTPSVNVPQGYSQNDIQLMANAVYGEARGEPYEGQVAVAAVILNRLNSALFPDTVSGVIFEPRAFTAVADGQIWLEPNDKAREAVLDAINGWDPSGNALYYFNPDTATSGWIWTRPQIKQIGKHIFCK</sequence>
<name>SLEB_OCEIH</name>
<reference key="1">
    <citation type="journal article" date="2002" name="Nucleic Acids Res.">
        <title>Genome sequence of Oceanobacillus iheyensis isolated from the Iheya Ridge and its unexpected adaptive capabilities to extreme environments.</title>
        <authorList>
            <person name="Takami H."/>
            <person name="Takaki Y."/>
            <person name="Uchiyama I."/>
        </authorList>
    </citation>
    <scope>NUCLEOTIDE SEQUENCE [LARGE SCALE GENOMIC DNA]</scope>
    <source>
        <strain>DSM 14371 / CIP 107618 / JCM 11309 / KCTC 3954 / HTE831</strain>
    </source>
</reference>
<organism>
    <name type="scientific">Oceanobacillus iheyensis (strain DSM 14371 / CIP 107618 / JCM 11309 / KCTC 3954 / HTE831)</name>
    <dbReference type="NCBI Taxonomy" id="221109"/>
    <lineage>
        <taxon>Bacteria</taxon>
        <taxon>Bacillati</taxon>
        <taxon>Bacillota</taxon>
        <taxon>Bacilli</taxon>
        <taxon>Bacillales</taxon>
        <taxon>Bacillaceae</taxon>
        <taxon>Oceanobacillus</taxon>
    </lineage>
</organism>
<accession>P59105</accession>
<evidence type="ECO:0000250" key="1"/>
<evidence type="ECO:0000255" key="2"/>
<evidence type="ECO:0000256" key="3">
    <source>
        <dbReference type="SAM" id="MobiDB-lite"/>
    </source>
</evidence>
<evidence type="ECO:0000305" key="4"/>
<feature type="signal peptide" evidence="2">
    <location>
        <begin position="1"/>
        <end position="25"/>
    </location>
</feature>
<feature type="chain" id="PRO_0000022359" description="Spore cortex-lytic enzyme">
    <location>
        <begin position="26"/>
        <end position="276"/>
    </location>
</feature>
<feature type="region of interest" description="Disordered" evidence="3">
    <location>
        <begin position="118"/>
        <end position="158"/>
    </location>
</feature>
<dbReference type="EMBL" id="BA000028">
    <property type="protein sequence ID" value="BAC13762.1"/>
    <property type="molecule type" value="Genomic_DNA"/>
</dbReference>
<dbReference type="SMR" id="P59105"/>
<dbReference type="STRING" id="221109.gene:10734046"/>
<dbReference type="KEGG" id="oih:OB1806"/>
<dbReference type="eggNOG" id="COG3409">
    <property type="taxonomic scope" value="Bacteria"/>
</dbReference>
<dbReference type="eggNOG" id="COG3773">
    <property type="taxonomic scope" value="Bacteria"/>
</dbReference>
<dbReference type="HOGENOM" id="CLU_053345_0_0_9"/>
<dbReference type="OrthoDB" id="9785345at2"/>
<dbReference type="Proteomes" id="UP000000822">
    <property type="component" value="Chromosome"/>
</dbReference>
<dbReference type="GO" id="GO:0016787">
    <property type="term" value="F:hydrolase activity"/>
    <property type="evidence" value="ECO:0007669"/>
    <property type="project" value="UniProtKB-KW"/>
</dbReference>
<dbReference type="GO" id="GO:0071555">
    <property type="term" value="P:cell wall organization"/>
    <property type="evidence" value="ECO:0007669"/>
    <property type="project" value="UniProtKB-KW"/>
</dbReference>
<dbReference type="GO" id="GO:0009847">
    <property type="term" value="P:spore germination"/>
    <property type="evidence" value="ECO:0007669"/>
    <property type="project" value="InterPro"/>
</dbReference>
<dbReference type="GO" id="GO:0030435">
    <property type="term" value="P:sporulation resulting in formation of a cellular spore"/>
    <property type="evidence" value="ECO:0007669"/>
    <property type="project" value="UniProtKB-KW"/>
</dbReference>
<dbReference type="FunFam" id="1.10.10.2520:FF:000001">
    <property type="entry name" value="Spore cortex-lytic enzyme"/>
    <property type="match status" value="1"/>
</dbReference>
<dbReference type="FunFam" id="6.20.240.60:FF:000001">
    <property type="entry name" value="Spore cortex-lytic enzyme"/>
    <property type="match status" value="1"/>
</dbReference>
<dbReference type="Gene3D" id="6.20.240.60">
    <property type="match status" value="1"/>
</dbReference>
<dbReference type="Gene3D" id="1.10.10.2520">
    <property type="entry name" value="Cell wall hydrolase SleB, domain 1"/>
    <property type="match status" value="1"/>
</dbReference>
<dbReference type="Gene3D" id="1.10.101.10">
    <property type="entry name" value="PGBD-like superfamily/PGBD"/>
    <property type="match status" value="1"/>
</dbReference>
<dbReference type="InterPro" id="IPR011105">
    <property type="entry name" value="Cell_wall_hydrolase_SleB"/>
</dbReference>
<dbReference type="InterPro" id="IPR002477">
    <property type="entry name" value="Peptidoglycan-bd-like"/>
</dbReference>
<dbReference type="InterPro" id="IPR036365">
    <property type="entry name" value="PGBD-like_sf"/>
</dbReference>
<dbReference type="InterPro" id="IPR036366">
    <property type="entry name" value="PGBDSf"/>
</dbReference>
<dbReference type="InterPro" id="IPR042047">
    <property type="entry name" value="SleB_dom1"/>
</dbReference>
<dbReference type="InterPro" id="IPR014224">
    <property type="entry name" value="Spore_cortex_SleB"/>
</dbReference>
<dbReference type="NCBIfam" id="TIGR02869">
    <property type="entry name" value="spore_SleB"/>
    <property type="match status" value="1"/>
</dbReference>
<dbReference type="Pfam" id="PF07486">
    <property type="entry name" value="Hydrolase_2"/>
    <property type="match status" value="1"/>
</dbReference>
<dbReference type="Pfam" id="PF01471">
    <property type="entry name" value="PG_binding_1"/>
    <property type="match status" value="1"/>
</dbReference>
<dbReference type="SUPFAM" id="SSF47090">
    <property type="entry name" value="PGBD-like"/>
    <property type="match status" value="1"/>
</dbReference>
<proteinExistence type="inferred from homology"/>
<gene>
    <name type="primary">sleB</name>
    <name type="ordered locus">OB1806</name>
</gene>